<name>RUBR1_PSEPU</name>
<reference key="1">
    <citation type="journal article" date="1999" name="Environ. Microbiol.">
        <title>Molecular screening for alkane hydroxylase genes in Gram-negative and Gram-positive strains.</title>
        <authorList>
            <person name="Smits T.H.M."/>
            <person name="Roethlisberger M."/>
            <person name="Witholt B."/>
            <person name="Van Beilen J.B."/>
        </authorList>
    </citation>
    <scope>NUCLEOTIDE SEQUENCE [GENOMIC DNA]</scope>
    <source>
        <strain>P1</strain>
    </source>
</reference>
<reference key="2">
    <citation type="journal article" date="2001" name="Microbiology">
        <title>Analysis of Pseudomonas putida alkane degradation gene clusters and flanking insertion sequences: evolution and regulation of the alk-genes.</title>
        <authorList>
            <person name="Van Beilen J.B."/>
            <person name="Panke S."/>
            <person name="Lucchini S."/>
            <person name="Franchini A.G."/>
            <person name="Roethlisberger M."/>
            <person name="Witholt B."/>
        </authorList>
    </citation>
    <scope>NUCLEOTIDE SEQUENCE [GENOMIC DNA]</scope>
    <source>
        <strain>P1</strain>
    </source>
</reference>
<protein>
    <recommendedName>
        <fullName>Rubredoxin-1</fullName>
        <shortName>Rdxs</shortName>
    </recommendedName>
</protein>
<sequence length="175" mass="19313">MARYQCPDCQYVYDESKGEEHEGFAPNTPWIVIPEDWCCPDCAVRDKLDFVLIEGSTGEKNISSNNTLSVSAKVSSSDVNTEISNTTMSAEIALDVATEGQHLNGRKPRVTNLQSGAAFLKWICITCGHIYDEALGDEVEGFAPGTRFEDIPNDWCCPDCGATKEDYVLYQEKLG</sequence>
<evidence type="ECO:0000250" key="1"/>
<evidence type="ECO:0000255" key="2">
    <source>
        <dbReference type="PROSITE-ProRule" id="PRU00241"/>
    </source>
</evidence>
<evidence type="ECO:0000305" key="3"/>
<organism>
    <name type="scientific">Pseudomonas putida</name>
    <name type="common">Arthrobacter siderocapsulatus</name>
    <dbReference type="NCBI Taxonomy" id="303"/>
    <lineage>
        <taxon>Bacteria</taxon>
        <taxon>Pseudomonadati</taxon>
        <taxon>Pseudomonadota</taxon>
        <taxon>Gammaproteobacteria</taxon>
        <taxon>Pseudomonadales</taxon>
        <taxon>Pseudomonadaceae</taxon>
        <taxon>Pseudomonas</taxon>
    </lineage>
</organism>
<dbReference type="EMBL" id="AJ233397">
    <property type="protein sequence ID" value="CAB51049.1"/>
    <property type="molecule type" value="Genomic_DNA"/>
</dbReference>
<dbReference type="SMR" id="Q9WWW4"/>
<dbReference type="UniPathway" id="UPA00191"/>
<dbReference type="GO" id="GO:0005737">
    <property type="term" value="C:cytoplasm"/>
    <property type="evidence" value="ECO:0007669"/>
    <property type="project" value="UniProtKB-SubCell"/>
</dbReference>
<dbReference type="GO" id="GO:0009055">
    <property type="term" value="F:electron transfer activity"/>
    <property type="evidence" value="ECO:0007669"/>
    <property type="project" value="TreeGrafter"/>
</dbReference>
<dbReference type="GO" id="GO:0005506">
    <property type="term" value="F:iron ion binding"/>
    <property type="evidence" value="ECO:0007669"/>
    <property type="project" value="InterPro"/>
</dbReference>
<dbReference type="GO" id="GO:0043448">
    <property type="term" value="P:alkane catabolic process"/>
    <property type="evidence" value="ECO:0007669"/>
    <property type="project" value="UniProtKB-UniPathway"/>
</dbReference>
<dbReference type="CDD" id="cd00730">
    <property type="entry name" value="rubredoxin"/>
    <property type="match status" value="2"/>
</dbReference>
<dbReference type="FunFam" id="2.20.28.10:FF:000001">
    <property type="entry name" value="Rubredoxin"/>
    <property type="match status" value="1"/>
</dbReference>
<dbReference type="Gene3D" id="2.20.28.10">
    <property type="match status" value="2"/>
</dbReference>
<dbReference type="InterPro" id="IPR024934">
    <property type="entry name" value="Rubredoxin-like_dom"/>
</dbReference>
<dbReference type="InterPro" id="IPR024935">
    <property type="entry name" value="Rubredoxin_dom"/>
</dbReference>
<dbReference type="InterPro" id="IPR050526">
    <property type="entry name" value="Rubredoxin_ET"/>
</dbReference>
<dbReference type="InterPro" id="IPR018527">
    <property type="entry name" value="Rubredoxin_Fe_BS"/>
</dbReference>
<dbReference type="PANTHER" id="PTHR47627">
    <property type="entry name" value="RUBREDOXIN"/>
    <property type="match status" value="1"/>
</dbReference>
<dbReference type="PANTHER" id="PTHR47627:SF1">
    <property type="entry name" value="RUBREDOXIN-1-RELATED"/>
    <property type="match status" value="1"/>
</dbReference>
<dbReference type="Pfam" id="PF00301">
    <property type="entry name" value="Rubredoxin"/>
    <property type="match status" value="2"/>
</dbReference>
<dbReference type="PRINTS" id="PR00163">
    <property type="entry name" value="RUBREDOXIN"/>
</dbReference>
<dbReference type="SUPFAM" id="SSF57802">
    <property type="entry name" value="Rubredoxin-like"/>
    <property type="match status" value="2"/>
</dbReference>
<dbReference type="PROSITE" id="PS00202">
    <property type="entry name" value="RUBREDOXIN"/>
    <property type="match status" value="2"/>
</dbReference>
<dbReference type="PROSITE" id="PS50903">
    <property type="entry name" value="RUBREDOXIN_LIKE"/>
    <property type="match status" value="2"/>
</dbReference>
<proteinExistence type="inferred from homology"/>
<feature type="chain" id="PRO_0000392233" description="Rubredoxin-1">
    <location>
        <begin position="1"/>
        <end position="175"/>
    </location>
</feature>
<feature type="domain" description="Rubredoxin-like 1" evidence="2">
    <location>
        <begin position="1"/>
        <end position="53"/>
    </location>
</feature>
<feature type="domain" description="Rubredoxin-like 2" evidence="2">
    <location>
        <begin position="119"/>
        <end position="170"/>
    </location>
</feature>
<feature type="binding site" evidence="2">
    <location>
        <position position="6"/>
    </location>
    <ligand>
        <name>Fe cation</name>
        <dbReference type="ChEBI" id="CHEBI:24875"/>
        <label>1</label>
    </ligand>
</feature>
<feature type="binding site" evidence="2">
    <location>
        <position position="9"/>
    </location>
    <ligand>
        <name>Fe cation</name>
        <dbReference type="ChEBI" id="CHEBI:24875"/>
        <label>1</label>
    </ligand>
</feature>
<feature type="binding site" evidence="2">
    <location>
        <position position="39"/>
    </location>
    <ligand>
        <name>Fe cation</name>
        <dbReference type="ChEBI" id="CHEBI:24875"/>
        <label>1</label>
    </ligand>
</feature>
<feature type="binding site" evidence="2">
    <location>
        <position position="42"/>
    </location>
    <ligand>
        <name>Fe cation</name>
        <dbReference type="ChEBI" id="CHEBI:24875"/>
        <label>1</label>
    </ligand>
</feature>
<feature type="binding site" evidence="2">
    <location>
        <position position="124"/>
    </location>
    <ligand>
        <name>Fe cation</name>
        <dbReference type="ChEBI" id="CHEBI:24875"/>
        <label>2</label>
    </ligand>
</feature>
<feature type="binding site" evidence="2">
    <location>
        <position position="127"/>
    </location>
    <ligand>
        <name>Fe cation</name>
        <dbReference type="ChEBI" id="CHEBI:24875"/>
        <label>2</label>
    </ligand>
</feature>
<feature type="binding site" evidence="2">
    <location>
        <position position="157"/>
    </location>
    <ligand>
        <name>Fe cation</name>
        <dbReference type="ChEBI" id="CHEBI:24875"/>
        <label>2</label>
    </ligand>
</feature>
<feature type="binding site" evidence="2">
    <location>
        <position position="160"/>
    </location>
    <ligand>
        <name>Fe cation</name>
        <dbReference type="ChEBI" id="CHEBI:24875"/>
        <label>2</label>
    </ligand>
</feature>
<gene>
    <name type="primary">alkG</name>
</gene>
<accession>Q9WWW4</accession>
<keyword id="KW-0963">Cytoplasm</keyword>
<keyword id="KW-0249">Electron transport</keyword>
<keyword id="KW-0408">Iron</keyword>
<keyword id="KW-0479">Metal-binding</keyword>
<keyword id="KW-0677">Repeat</keyword>
<keyword id="KW-0813">Transport</keyword>
<comment type="function">
    <text evidence="1">Involved in the hydrocarbon hydroxylating system, which transfers electrons from NADH to rubredoxin reductase and then through rubredoxin to alkane 1 monooxygenase.</text>
</comment>
<comment type="cofactor">
    <cofactor evidence="1">
        <name>Fe(3+)</name>
        <dbReference type="ChEBI" id="CHEBI:29034"/>
    </cofactor>
    <text evidence="1">Binds 2 Fe(3+) ions per subunit.</text>
</comment>
<comment type="pathway">
    <text>Hydrocarbon metabolism; alkane degradation.</text>
</comment>
<comment type="subcellular location">
    <subcellularLocation>
        <location evidence="1">Cytoplasm</location>
    </subcellularLocation>
</comment>
<comment type="similarity">
    <text evidence="3">Belongs to the rubredoxin family.</text>
</comment>